<comment type="function">
    <text evidence="1">Catalyzes the N-acylation of UDP-3-O-acylglucosamine using 3-hydroxyacyl-ACP as the acyl donor. Is involved in the biosynthesis of lipid A, a phosphorylated glycolipid that anchors the lipopolysaccharide to the outer membrane of the cell.</text>
</comment>
<comment type="catalytic activity">
    <reaction evidence="1">
        <text>a UDP-3-O-[(3R)-3-hydroxyacyl]-alpha-D-glucosamine + a (3R)-hydroxyacyl-[ACP] = a UDP-2-N,3-O-bis[(3R)-3-hydroxyacyl]-alpha-D-glucosamine + holo-[ACP] + H(+)</text>
        <dbReference type="Rhea" id="RHEA:53836"/>
        <dbReference type="Rhea" id="RHEA-COMP:9685"/>
        <dbReference type="Rhea" id="RHEA-COMP:9945"/>
        <dbReference type="ChEBI" id="CHEBI:15378"/>
        <dbReference type="ChEBI" id="CHEBI:64479"/>
        <dbReference type="ChEBI" id="CHEBI:78827"/>
        <dbReference type="ChEBI" id="CHEBI:137740"/>
        <dbReference type="ChEBI" id="CHEBI:137748"/>
        <dbReference type="EC" id="2.3.1.191"/>
    </reaction>
</comment>
<comment type="pathway">
    <text evidence="1">Bacterial outer membrane biogenesis; LPS lipid A biosynthesis.</text>
</comment>
<comment type="subunit">
    <text evidence="1">Homotrimer.</text>
</comment>
<comment type="similarity">
    <text evidence="1">Belongs to the transferase hexapeptide repeat family. LpxD subfamily.</text>
</comment>
<sequence>MHTLGDIAKTINAKLVGDSNVEITGVASSLYANQTQLTYIINSKYKQTLIHSKAGVVILNKDLLRICPTNALVVDNVYLAFAKATHLFKKQNVCYQGIHPSAKINNAKIAPNCIIGRNVSIGNHCIIASNVVIEDNVTIGNYALIQPNVSILQGCSIGDNIVISPGVVIGSEGFGNAQDQQKHWHSIAHLGYVVIGNNVSIGANTTIDRGTIEDTQIHNGVRIDNLVHIAHNVIIEQDSAIAATVTIGGSCKLGKRCMVGGGATITSHVNLADDIIITGASTVDKNLSEQGHYTGFTSISKHQKWKKIQVWLLNLDKIVHYLNIKLKKLKEK</sequence>
<evidence type="ECO:0000255" key="1">
    <source>
        <dbReference type="HAMAP-Rule" id="MF_00523"/>
    </source>
</evidence>
<name>LPXD_VESOH</name>
<feature type="chain" id="PRO_1000050965" description="UDP-3-O-acylglucosamine N-acyltransferase">
    <location>
        <begin position="1"/>
        <end position="332"/>
    </location>
</feature>
<feature type="active site" description="Proton acceptor" evidence="1">
    <location>
        <position position="231"/>
    </location>
</feature>
<keyword id="KW-0012">Acyltransferase</keyword>
<keyword id="KW-0441">Lipid A biosynthesis</keyword>
<keyword id="KW-0444">Lipid biosynthesis</keyword>
<keyword id="KW-0443">Lipid metabolism</keyword>
<keyword id="KW-1185">Reference proteome</keyword>
<keyword id="KW-0677">Repeat</keyword>
<keyword id="KW-0808">Transferase</keyword>
<dbReference type="EC" id="2.3.1.191" evidence="1"/>
<dbReference type="EMBL" id="AP009247">
    <property type="protein sequence ID" value="BAF61627.1"/>
    <property type="molecule type" value="Genomic_DNA"/>
</dbReference>
<dbReference type="RefSeq" id="WP_011929897.1">
    <property type="nucleotide sequence ID" value="NC_009465.1"/>
</dbReference>
<dbReference type="SMR" id="A5CWN8"/>
<dbReference type="STRING" id="412965.COSY_0508"/>
<dbReference type="KEGG" id="vok:COSY_0508"/>
<dbReference type="eggNOG" id="COG1044">
    <property type="taxonomic scope" value="Bacteria"/>
</dbReference>
<dbReference type="HOGENOM" id="CLU_049865_0_1_6"/>
<dbReference type="OrthoDB" id="9784739at2"/>
<dbReference type="UniPathway" id="UPA00973"/>
<dbReference type="Proteomes" id="UP000000247">
    <property type="component" value="Chromosome"/>
</dbReference>
<dbReference type="GO" id="GO:0016020">
    <property type="term" value="C:membrane"/>
    <property type="evidence" value="ECO:0007669"/>
    <property type="project" value="GOC"/>
</dbReference>
<dbReference type="GO" id="GO:0016410">
    <property type="term" value="F:N-acyltransferase activity"/>
    <property type="evidence" value="ECO:0007669"/>
    <property type="project" value="InterPro"/>
</dbReference>
<dbReference type="GO" id="GO:0009245">
    <property type="term" value="P:lipid A biosynthetic process"/>
    <property type="evidence" value="ECO:0007669"/>
    <property type="project" value="UniProtKB-UniRule"/>
</dbReference>
<dbReference type="CDD" id="cd03352">
    <property type="entry name" value="LbH_LpxD"/>
    <property type="match status" value="1"/>
</dbReference>
<dbReference type="Gene3D" id="2.160.10.10">
    <property type="entry name" value="Hexapeptide repeat proteins"/>
    <property type="match status" value="1"/>
</dbReference>
<dbReference type="Gene3D" id="3.40.1390.10">
    <property type="entry name" value="MurE/MurF, N-terminal domain"/>
    <property type="match status" value="1"/>
</dbReference>
<dbReference type="HAMAP" id="MF_00523">
    <property type="entry name" value="LpxD"/>
    <property type="match status" value="1"/>
</dbReference>
<dbReference type="InterPro" id="IPR001451">
    <property type="entry name" value="Hexapep"/>
</dbReference>
<dbReference type="InterPro" id="IPR007691">
    <property type="entry name" value="LpxD"/>
</dbReference>
<dbReference type="InterPro" id="IPR011004">
    <property type="entry name" value="Trimer_LpxA-like_sf"/>
</dbReference>
<dbReference type="InterPro" id="IPR020573">
    <property type="entry name" value="UDP_GlcNAc_AcTrfase_non-rep"/>
</dbReference>
<dbReference type="NCBIfam" id="TIGR01853">
    <property type="entry name" value="lipid_A_lpxD"/>
    <property type="match status" value="1"/>
</dbReference>
<dbReference type="NCBIfam" id="NF002060">
    <property type="entry name" value="PRK00892.1"/>
    <property type="match status" value="1"/>
</dbReference>
<dbReference type="PANTHER" id="PTHR43378">
    <property type="entry name" value="UDP-3-O-ACYLGLUCOSAMINE N-ACYLTRANSFERASE"/>
    <property type="match status" value="1"/>
</dbReference>
<dbReference type="PANTHER" id="PTHR43378:SF2">
    <property type="entry name" value="UDP-3-O-ACYLGLUCOSAMINE N-ACYLTRANSFERASE 1, MITOCHONDRIAL-RELATED"/>
    <property type="match status" value="1"/>
</dbReference>
<dbReference type="Pfam" id="PF00132">
    <property type="entry name" value="Hexapep"/>
    <property type="match status" value="3"/>
</dbReference>
<dbReference type="Pfam" id="PF04613">
    <property type="entry name" value="LpxD"/>
    <property type="match status" value="1"/>
</dbReference>
<dbReference type="SUPFAM" id="SSF51161">
    <property type="entry name" value="Trimeric LpxA-like enzymes"/>
    <property type="match status" value="1"/>
</dbReference>
<accession>A5CWN8</accession>
<proteinExistence type="inferred from homology"/>
<organism>
    <name type="scientific">Vesicomyosocius okutanii subsp. Calyptogena okutanii (strain HA)</name>
    <dbReference type="NCBI Taxonomy" id="412965"/>
    <lineage>
        <taxon>Bacteria</taxon>
        <taxon>Pseudomonadati</taxon>
        <taxon>Pseudomonadota</taxon>
        <taxon>Gammaproteobacteria</taxon>
        <taxon>Candidatus Pseudothioglobaceae</taxon>
        <taxon>Candidatus Vesicomyosocius</taxon>
    </lineage>
</organism>
<reference key="1">
    <citation type="journal article" date="2007" name="Curr. Biol.">
        <title>Reduced genome of the thioautotrophic intracellular symbiont in a deep-sea clam, Calyptogena okutanii.</title>
        <authorList>
            <person name="Kuwahara H."/>
            <person name="Yoshida T."/>
            <person name="Takaki Y."/>
            <person name="Shimamura S."/>
            <person name="Nishi S."/>
            <person name="Harada M."/>
            <person name="Matsuyama K."/>
            <person name="Takishita K."/>
            <person name="Kawato M."/>
            <person name="Uematsu K."/>
            <person name="Fujiwara Y."/>
            <person name="Sato T."/>
            <person name="Kato C."/>
            <person name="Kitagawa M."/>
            <person name="Kato I."/>
            <person name="Maruyama T."/>
        </authorList>
    </citation>
    <scope>NUCLEOTIDE SEQUENCE [LARGE SCALE GENOMIC DNA]</scope>
    <source>
        <strain>HA</strain>
    </source>
</reference>
<gene>
    <name evidence="1" type="primary">lpxD</name>
    <name type="ordered locus">COSY_0508</name>
</gene>
<protein>
    <recommendedName>
        <fullName evidence="1">UDP-3-O-acylglucosamine N-acyltransferase</fullName>
        <ecNumber evidence="1">2.3.1.191</ecNumber>
    </recommendedName>
</protein>